<accession>A4VZT9</accession>
<keyword id="KW-0131">Cell cycle</keyword>
<keyword id="KW-0132">Cell division</keyword>
<keyword id="KW-1003">Cell membrane</keyword>
<keyword id="KW-0133">Cell shape</keyword>
<keyword id="KW-0961">Cell wall biogenesis/degradation</keyword>
<keyword id="KW-0328">Glycosyltransferase</keyword>
<keyword id="KW-0472">Membrane</keyword>
<keyword id="KW-0573">Peptidoglycan synthesis</keyword>
<keyword id="KW-0808">Transferase</keyword>
<gene>
    <name evidence="1" type="primary">murG</name>
    <name type="ordered locus">SSU98_0470</name>
</gene>
<feature type="chain" id="PRO_0000315184" description="UDP-N-acetylglucosamine--N-acetylmuramyl-(pentapeptide) pyrophosphoryl-undecaprenol N-acetylglucosamine transferase">
    <location>
        <begin position="1"/>
        <end position="354"/>
    </location>
</feature>
<feature type="binding site" evidence="1">
    <location>
        <position position="196"/>
    </location>
    <ligand>
        <name>UDP-N-acetyl-alpha-D-glucosamine</name>
        <dbReference type="ChEBI" id="CHEBI:57705"/>
    </ligand>
</feature>
<feature type="binding site" evidence="1">
    <location>
        <position position="288"/>
    </location>
    <ligand>
        <name>UDP-N-acetyl-alpha-D-glucosamine</name>
        <dbReference type="ChEBI" id="CHEBI:57705"/>
    </ligand>
</feature>
<dbReference type="EC" id="2.4.1.227" evidence="1"/>
<dbReference type="EMBL" id="CP000408">
    <property type="protein sequence ID" value="ABP91628.1"/>
    <property type="molecule type" value="Genomic_DNA"/>
</dbReference>
<dbReference type="SMR" id="A4VZT9"/>
<dbReference type="CAZy" id="GT28">
    <property type="family name" value="Glycosyltransferase Family 28"/>
</dbReference>
<dbReference type="KEGG" id="ssv:SSU98_0470"/>
<dbReference type="HOGENOM" id="CLU_037404_0_0_9"/>
<dbReference type="UniPathway" id="UPA00219"/>
<dbReference type="GO" id="GO:0005886">
    <property type="term" value="C:plasma membrane"/>
    <property type="evidence" value="ECO:0007669"/>
    <property type="project" value="UniProtKB-SubCell"/>
</dbReference>
<dbReference type="GO" id="GO:0050511">
    <property type="term" value="F:undecaprenyldiphospho-muramoylpentapeptide beta-N-acetylglucosaminyltransferase activity"/>
    <property type="evidence" value="ECO:0007669"/>
    <property type="project" value="UniProtKB-UniRule"/>
</dbReference>
<dbReference type="GO" id="GO:0005975">
    <property type="term" value="P:carbohydrate metabolic process"/>
    <property type="evidence" value="ECO:0007669"/>
    <property type="project" value="InterPro"/>
</dbReference>
<dbReference type="GO" id="GO:0051301">
    <property type="term" value="P:cell division"/>
    <property type="evidence" value="ECO:0007669"/>
    <property type="project" value="UniProtKB-KW"/>
</dbReference>
<dbReference type="GO" id="GO:0071555">
    <property type="term" value="P:cell wall organization"/>
    <property type="evidence" value="ECO:0007669"/>
    <property type="project" value="UniProtKB-KW"/>
</dbReference>
<dbReference type="GO" id="GO:0030259">
    <property type="term" value="P:lipid glycosylation"/>
    <property type="evidence" value="ECO:0007669"/>
    <property type="project" value="UniProtKB-UniRule"/>
</dbReference>
<dbReference type="GO" id="GO:0009252">
    <property type="term" value="P:peptidoglycan biosynthetic process"/>
    <property type="evidence" value="ECO:0007669"/>
    <property type="project" value="UniProtKB-UniRule"/>
</dbReference>
<dbReference type="GO" id="GO:0008360">
    <property type="term" value="P:regulation of cell shape"/>
    <property type="evidence" value="ECO:0007669"/>
    <property type="project" value="UniProtKB-KW"/>
</dbReference>
<dbReference type="CDD" id="cd03785">
    <property type="entry name" value="GT28_MurG"/>
    <property type="match status" value="1"/>
</dbReference>
<dbReference type="Gene3D" id="3.40.50.2000">
    <property type="entry name" value="Glycogen Phosphorylase B"/>
    <property type="match status" value="2"/>
</dbReference>
<dbReference type="HAMAP" id="MF_00033">
    <property type="entry name" value="MurG"/>
    <property type="match status" value="1"/>
</dbReference>
<dbReference type="InterPro" id="IPR006009">
    <property type="entry name" value="GlcNAc_MurG"/>
</dbReference>
<dbReference type="InterPro" id="IPR007235">
    <property type="entry name" value="Glyco_trans_28_C"/>
</dbReference>
<dbReference type="InterPro" id="IPR004276">
    <property type="entry name" value="GlycoTrans_28_N"/>
</dbReference>
<dbReference type="PANTHER" id="PTHR21015:SF27">
    <property type="entry name" value="UDP-N-ACETYLGLUCOSAMINE--N-ACETYLMURAMYL-(PENTAPEPTIDE) PYROPHOSPHORYL-UNDECAPRENOL N-ACETYLGLUCOSAMINE TRANSFERASE"/>
    <property type="match status" value="1"/>
</dbReference>
<dbReference type="PANTHER" id="PTHR21015">
    <property type="entry name" value="UDP-N-ACETYLGLUCOSAMINE--N-ACETYLMURAMYL-(PENTAPEPTIDE) PYROPHOSPHORYL-UNDECAPRENOL N-ACETYLGLUCOSAMINE TRANSFERASE 1"/>
    <property type="match status" value="1"/>
</dbReference>
<dbReference type="Pfam" id="PF04101">
    <property type="entry name" value="Glyco_tran_28_C"/>
    <property type="match status" value="1"/>
</dbReference>
<dbReference type="Pfam" id="PF03033">
    <property type="entry name" value="Glyco_transf_28"/>
    <property type="match status" value="1"/>
</dbReference>
<dbReference type="SUPFAM" id="SSF53756">
    <property type="entry name" value="UDP-Glycosyltransferase/glycogen phosphorylase"/>
    <property type="match status" value="1"/>
</dbReference>
<organism>
    <name type="scientific">Streptococcus suis (strain 98HAH33)</name>
    <dbReference type="NCBI Taxonomy" id="391296"/>
    <lineage>
        <taxon>Bacteria</taxon>
        <taxon>Bacillati</taxon>
        <taxon>Bacillota</taxon>
        <taxon>Bacilli</taxon>
        <taxon>Lactobacillales</taxon>
        <taxon>Streptococcaceae</taxon>
        <taxon>Streptococcus</taxon>
    </lineage>
</organism>
<name>MURG_STRS2</name>
<protein>
    <recommendedName>
        <fullName evidence="1">UDP-N-acetylglucosamine--N-acetylmuramyl-(pentapeptide) pyrophosphoryl-undecaprenol N-acetylglucosamine transferase</fullName>
        <ecNumber evidence="1">2.4.1.227</ecNumber>
    </recommendedName>
    <alternativeName>
        <fullName evidence="1">Undecaprenyl-PP-MurNAc-pentapeptide-UDPGlcNAc GlcNAc transferase</fullName>
    </alternativeName>
</protein>
<proteinExistence type="inferred from homology"/>
<sequence length="354" mass="39327">MKKIVFTGGGTVGHVTLNLLLIPRFLEEGWEVHYIGDGNGIEHEQVVKSGLDVHFHSIATGKLRRYFSFQNMLDVFKVGFGVLQSLTIIAKIRPQALFSKGGFVSVPPVIAANLLRVPVFIHESDLTMGLANKIAYKFATTMYSTFEQPASLTKVKHVGAVTKVGQTNDKVTPIQLPEILSHFDKSLPTLLFVGGSGGAKVFNDLISQNSAALTERFNIINLTGDSSLNKLDKNLYRVDYVTELYQPLMDLADVVITRGGSNTLFELIAMQQLHLIVPLGRQASRGDQIENALYAEKKGYSKQIDESQLTFASLLVEVDELLKHKEFYVQNMANSNEIQSVDSFYNLLREDMGR</sequence>
<comment type="function">
    <text evidence="1">Cell wall formation. Catalyzes the transfer of a GlcNAc subunit on undecaprenyl-pyrophosphoryl-MurNAc-pentapeptide (lipid intermediate I) to form undecaprenyl-pyrophosphoryl-MurNAc-(pentapeptide)GlcNAc (lipid intermediate II).</text>
</comment>
<comment type="catalytic activity">
    <reaction evidence="1">
        <text>Mur2Ac(oyl-L-Ala-gamma-D-Glu-L-Lys-D-Ala-D-Ala)-di-trans,octa-cis-undecaprenyl diphosphate + UDP-N-acetyl-alpha-D-glucosamine = beta-D-GlcNAc-(1-&gt;4)-Mur2Ac(oyl-L-Ala-gamma-D-Glu-L-Lys-D-Ala-D-Ala)-di-trans,octa-cis-undecaprenyl diphosphate + UDP + H(+)</text>
        <dbReference type="Rhea" id="RHEA:23192"/>
        <dbReference type="ChEBI" id="CHEBI:15378"/>
        <dbReference type="ChEBI" id="CHEBI:57705"/>
        <dbReference type="ChEBI" id="CHEBI:58223"/>
        <dbReference type="ChEBI" id="CHEBI:60032"/>
        <dbReference type="ChEBI" id="CHEBI:60033"/>
        <dbReference type="EC" id="2.4.1.227"/>
    </reaction>
</comment>
<comment type="pathway">
    <text evidence="1">Cell wall biogenesis; peptidoglycan biosynthesis.</text>
</comment>
<comment type="subcellular location">
    <subcellularLocation>
        <location evidence="1">Cell membrane</location>
        <topology evidence="1">Peripheral membrane protein</topology>
        <orientation evidence="1">Cytoplasmic side</orientation>
    </subcellularLocation>
</comment>
<comment type="similarity">
    <text evidence="1">Belongs to the glycosyltransferase 28 family. MurG subfamily.</text>
</comment>
<reference key="1">
    <citation type="journal article" date="2007" name="PLoS ONE">
        <title>A glimpse of streptococcal toxic shock syndrome from comparative genomics of S. suis 2 Chinese isolates.</title>
        <authorList>
            <person name="Chen C."/>
            <person name="Tang J."/>
            <person name="Dong W."/>
            <person name="Wang C."/>
            <person name="Feng Y."/>
            <person name="Wang J."/>
            <person name="Zheng F."/>
            <person name="Pan X."/>
            <person name="Liu D."/>
            <person name="Li M."/>
            <person name="Song Y."/>
            <person name="Zhu X."/>
            <person name="Sun H."/>
            <person name="Feng T."/>
            <person name="Guo Z."/>
            <person name="Ju A."/>
            <person name="Ge J."/>
            <person name="Dong Y."/>
            <person name="Sun W."/>
            <person name="Jiang Y."/>
            <person name="Wang J."/>
            <person name="Yan J."/>
            <person name="Yang H."/>
            <person name="Wang X."/>
            <person name="Gao G.F."/>
            <person name="Yang R."/>
            <person name="Wang J."/>
            <person name="Yu J."/>
        </authorList>
    </citation>
    <scope>NUCLEOTIDE SEQUENCE [LARGE SCALE GENOMIC DNA]</scope>
    <source>
        <strain>98HAH33</strain>
    </source>
</reference>
<evidence type="ECO:0000255" key="1">
    <source>
        <dbReference type="HAMAP-Rule" id="MF_00033"/>
    </source>
</evidence>